<keyword id="KW-0007">Acetylation</keyword>
<keyword id="KW-0556">Organic radical</keyword>
<feature type="chain" id="PRO_1000133982" description="Autonomous glycyl radical cofactor">
    <location>
        <begin position="1"/>
        <end position="127"/>
    </location>
</feature>
<feature type="domain" description="Glycine radical" evidence="1">
    <location>
        <begin position="5"/>
        <end position="127"/>
    </location>
</feature>
<feature type="modified residue" description="N6-acetyllysine" evidence="1">
    <location>
        <position position="48"/>
    </location>
</feature>
<feature type="modified residue" description="N6-acetyllysine" evidence="1">
    <location>
        <position position="88"/>
    </location>
</feature>
<feature type="modified residue" description="N6-acetyllysine" evidence="1">
    <location>
        <position position="92"/>
    </location>
</feature>
<feature type="modified residue" description="Glycine radical" evidence="1">
    <location>
        <position position="102"/>
    </location>
</feature>
<evidence type="ECO:0000255" key="1">
    <source>
        <dbReference type="HAMAP-Rule" id="MF_00806"/>
    </source>
</evidence>
<dbReference type="EMBL" id="CP001164">
    <property type="protein sequence ID" value="ACI34993.1"/>
    <property type="molecule type" value="Genomic_DNA"/>
</dbReference>
<dbReference type="RefSeq" id="WP_000627807.1">
    <property type="nucleotide sequence ID" value="NC_011353.1"/>
</dbReference>
<dbReference type="SMR" id="B5Z153"/>
<dbReference type="GeneID" id="93774507"/>
<dbReference type="KEGG" id="ecf:ECH74115_3816"/>
<dbReference type="HOGENOM" id="CLU_133780_0_0_6"/>
<dbReference type="GO" id="GO:0005829">
    <property type="term" value="C:cytosol"/>
    <property type="evidence" value="ECO:0007669"/>
    <property type="project" value="TreeGrafter"/>
</dbReference>
<dbReference type="GO" id="GO:0008861">
    <property type="term" value="F:formate C-acetyltransferase activity"/>
    <property type="evidence" value="ECO:0007669"/>
    <property type="project" value="TreeGrafter"/>
</dbReference>
<dbReference type="FunFam" id="3.20.70.20:FF:000002">
    <property type="entry name" value="Autonomous glycyl radical cofactor"/>
    <property type="match status" value="1"/>
</dbReference>
<dbReference type="Gene3D" id="3.20.70.20">
    <property type="match status" value="1"/>
</dbReference>
<dbReference type="HAMAP" id="MF_00806">
    <property type="entry name" value="GrcA"/>
    <property type="match status" value="1"/>
</dbReference>
<dbReference type="InterPro" id="IPR050244">
    <property type="entry name" value="Auton_GlycylRad_Cofactor"/>
</dbReference>
<dbReference type="InterPro" id="IPR019777">
    <property type="entry name" value="Form_AcTrfase_GR_CS"/>
</dbReference>
<dbReference type="InterPro" id="IPR001150">
    <property type="entry name" value="Gly_radical"/>
</dbReference>
<dbReference type="InterPro" id="IPR011140">
    <property type="entry name" value="Glycyl_radical_cofactor_GrcA"/>
</dbReference>
<dbReference type="NCBIfam" id="TIGR04365">
    <property type="entry name" value="spare_glycyl"/>
    <property type="match status" value="1"/>
</dbReference>
<dbReference type="PANTHER" id="PTHR30191">
    <property type="entry name" value="FORMATE ACETYLTRANSFERASE"/>
    <property type="match status" value="1"/>
</dbReference>
<dbReference type="PANTHER" id="PTHR30191:SF0">
    <property type="entry name" value="FORMATE ACETYLTRANSFERASE 1"/>
    <property type="match status" value="1"/>
</dbReference>
<dbReference type="Pfam" id="PF01228">
    <property type="entry name" value="Gly_radical"/>
    <property type="match status" value="1"/>
</dbReference>
<dbReference type="PIRSF" id="PIRSF000378">
    <property type="entry name" value="Gly_radicl_yfiD"/>
    <property type="match status" value="1"/>
</dbReference>
<dbReference type="SUPFAM" id="SSF51998">
    <property type="entry name" value="PFL-like glycyl radical enzymes"/>
    <property type="match status" value="1"/>
</dbReference>
<dbReference type="PROSITE" id="PS00850">
    <property type="entry name" value="GLY_RADICAL_1"/>
    <property type="match status" value="1"/>
</dbReference>
<dbReference type="PROSITE" id="PS51149">
    <property type="entry name" value="GLY_RADICAL_2"/>
    <property type="match status" value="1"/>
</dbReference>
<proteinExistence type="inferred from homology"/>
<protein>
    <recommendedName>
        <fullName evidence="1">Autonomous glycyl radical cofactor</fullName>
    </recommendedName>
</protein>
<sequence>MITGIQITKAANDDLLNSFWLLDSEKGEARCIVAKAGYAEDEVVAVSKLGDIEYREVPVEVKPEVRVEGGQHLNVNVLRRETLEDAVKHPEKYPQLTIRVSGYAVRFNSLTPEQQRDVIARTFTESL</sequence>
<comment type="function">
    <text evidence="1">Acts as a radical domain for damaged PFL and possibly other radical proteins.</text>
</comment>
<name>GRCA_ECO5E</name>
<organism>
    <name type="scientific">Escherichia coli O157:H7 (strain EC4115 / EHEC)</name>
    <dbReference type="NCBI Taxonomy" id="444450"/>
    <lineage>
        <taxon>Bacteria</taxon>
        <taxon>Pseudomonadati</taxon>
        <taxon>Pseudomonadota</taxon>
        <taxon>Gammaproteobacteria</taxon>
        <taxon>Enterobacterales</taxon>
        <taxon>Enterobacteriaceae</taxon>
        <taxon>Escherichia</taxon>
    </lineage>
</organism>
<accession>B5Z153</accession>
<gene>
    <name evidence="1" type="primary">grcA</name>
    <name type="ordered locus">ECH74115_3816</name>
</gene>
<reference key="1">
    <citation type="journal article" date="2011" name="Proc. Natl. Acad. Sci. U.S.A.">
        <title>Genomic anatomy of Escherichia coli O157:H7 outbreaks.</title>
        <authorList>
            <person name="Eppinger M."/>
            <person name="Mammel M.K."/>
            <person name="Leclerc J.E."/>
            <person name="Ravel J."/>
            <person name="Cebula T.A."/>
        </authorList>
    </citation>
    <scope>NUCLEOTIDE SEQUENCE [LARGE SCALE GENOMIC DNA]</scope>
    <source>
        <strain>EC4115 / EHEC</strain>
    </source>
</reference>